<evidence type="ECO:0000250" key="1">
    <source>
        <dbReference type="UniProtKB" id="P09339"/>
    </source>
</evidence>
<evidence type="ECO:0000250" key="2">
    <source>
        <dbReference type="UniProtKB" id="P36683"/>
    </source>
</evidence>
<evidence type="ECO:0000250" key="3">
    <source>
        <dbReference type="UniProtKB" id="Q8ZP52"/>
    </source>
</evidence>
<evidence type="ECO:0000269" key="4">
    <source>
    </source>
</evidence>
<evidence type="ECO:0000305" key="5"/>
<keyword id="KW-0004">4Fe-4S</keyword>
<keyword id="KW-0903">Direct protein sequencing</keyword>
<keyword id="KW-0408">Iron</keyword>
<keyword id="KW-0411">Iron-sulfur</keyword>
<keyword id="KW-0456">Lyase</keyword>
<keyword id="KW-0479">Metal-binding</keyword>
<keyword id="KW-1185">Reference proteome</keyword>
<keyword id="KW-0694">RNA-binding</keyword>
<keyword id="KW-0816">Tricarboxylic acid cycle</keyword>
<gene>
    <name type="primary">acn</name>
    <name type="ordered locus">DR_1720</name>
</gene>
<comment type="function">
    <text evidence="1 3">Involved in the catabolism of short chain fatty acids (SCFA) via the tricarboxylic acid (TCA)(acetyl degradation route) and probably the 2-methylcitrate cycle I (propionate degradation route). Catalyzes the reversible isomerization of citrate to isocitrate via cis-aconitate. Could catalyze the hydration of 2-methyl-cis-aconitate to yield (2R,3S)-2-methylisocitrate. The apo form of AcnA functions as a RNA-binding regulatory protein.</text>
</comment>
<comment type="catalytic activity">
    <reaction evidence="3">
        <text>citrate = D-threo-isocitrate</text>
        <dbReference type="Rhea" id="RHEA:10336"/>
        <dbReference type="ChEBI" id="CHEBI:15562"/>
        <dbReference type="ChEBI" id="CHEBI:16947"/>
        <dbReference type="EC" id="4.2.1.3"/>
    </reaction>
</comment>
<comment type="catalytic activity">
    <reaction evidence="3">
        <text>(2S,3R)-3-hydroxybutane-1,2,3-tricarboxylate = 2-methyl-cis-aconitate + H2O</text>
        <dbReference type="Rhea" id="RHEA:17941"/>
        <dbReference type="ChEBI" id="CHEBI:15377"/>
        <dbReference type="ChEBI" id="CHEBI:57429"/>
        <dbReference type="ChEBI" id="CHEBI:57872"/>
        <dbReference type="EC" id="4.2.1.99"/>
    </reaction>
</comment>
<comment type="cofactor">
    <cofactor evidence="1">
        <name>[4Fe-4S] cluster</name>
        <dbReference type="ChEBI" id="CHEBI:49883"/>
    </cofactor>
    <text evidence="1">Binds 1 [4Fe-4S] cluster per subunit.</text>
</comment>
<comment type="pathway">
    <text evidence="3">Carbohydrate metabolism; tricarboxylic acid cycle; isocitrate from oxaloacetate: step 2/2.</text>
</comment>
<comment type="pathway">
    <text evidence="3">Organic acid metabolism; propanoate degradation.</text>
</comment>
<comment type="subunit">
    <text evidence="1">Monomer.</text>
</comment>
<comment type="similarity">
    <text evidence="5">Belongs to the aconitase/IPM isomerase family.</text>
</comment>
<sequence length="906" mass="98002">MSDKAMNLFGARDTLQVPGSDKKLYFYNLNKLQGHDVSRLPVSIKVLLESVLREANDYDVRREDVETVAGWSATNPEVEIPFKPARVILQDFTGVPAVVDLAAMRSAMVKLGGDPSKINPLIPVDLVIDHSVQVDEFGTEFALANNMALEFERNRERYEFLRWGQQAFDNFGVVPPASGIVHQVNLEYLAKGVQSRAEDDGEVVYPDSLVGTDSHTTMINGLGIVGWGVGGIEAEAVMLGQPIYMLMPEVIGFKITGAMPEGATATDLALRVTQMLREKGVVGKFVEFYGAGLSNMTLPDRATIANMAPEYGATMGFFPVDDEALRYLRRTGRLEDEIGLVEAYYKAQGMFRTDETPDPVFTDTIELDLATIVPSLAGPKRPQDRVNLSDMHSVFNEALTAPVKNRGFELGSDKLDAQGTIGGTDIKIGHGAVTLASITSCTNTSNPSVLIAAGLVAKKAVEKGLKTKPWVKTSLAPGSRVVTEYLETAGLQQYLDQIGFNTVGYGCMTCIGNSGPLPEPVVEAIQEGDLVVASVLSGNRNFEGRVNPHIKANYLASPPLVVAYALAGTVVNDIVNDAIGQDSNGQDVFLKDIWPTNAEIQEAMDRSINAEMFKKVYDGIEKSNADWNAIPVAEGALFDWKEDSTYIQNPPFFDTLAGGAHEIESIKGARALVKVGDSVTTDHISPAGSFKADTPAGRYLTERGIAPKDFNSYGSRRGNDRIMTRGTFANIRLKNQLAPGTEGGFTTNFLNGEVTSIFDASTAYKEAGVPLVVLAGKDYGMGSSRDWAAKGTFLLGVKAVIAESFERIHRSNLVGMGVLPLQYKNGETADSLGINGDETFEFVLPGDLKPRQDVTVKVTGKDGNTRDITVMCRIDTPVEIDYYKNGGILQTVLRGILSKSQGEVKA</sequence>
<dbReference type="EC" id="4.2.1.3" evidence="3"/>
<dbReference type="EC" id="4.2.1.99" evidence="3"/>
<dbReference type="EMBL" id="AE000513">
    <property type="protein sequence ID" value="AAF11276.1"/>
    <property type="molecule type" value="Genomic_DNA"/>
</dbReference>
<dbReference type="PIR" id="G75362">
    <property type="entry name" value="G75362"/>
</dbReference>
<dbReference type="RefSeq" id="NP_295443.1">
    <property type="nucleotide sequence ID" value="NC_001263.1"/>
</dbReference>
<dbReference type="RefSeq" id="WP_010888355.1">
    <property type="nucleotide sequence ID" value="NC_001263.1"/>
</dbReference>
<dbReference type="SMR" id="Q9RTN7"/>
<dbReference type="FunCoup" id="Q9RTN7">
    <property type="interactions" value="421"/>
</dbReference>
<dbReference type="STRING" id="243230.DR_1720"/>
<dbReference type="PaxDb" id="243230-DR_1720"/>
<dbReference type="EnsemblBacteria" id="AAF11276">
    <property type="protein sequence ID" value="AAF11276"/>
    <property type="gene ID" value="DR_1720"/>
</dbReference>
<dbReference type="GeneID" id="69517957"/>
<dbReference type="KEGG" id="dra:DR_1720"/>
<dbReference type="PATRIC" id="fig|243230.17.peg.1931"/>
<dbReference type="eggNOG" id="COG1048">
    <property type="taxonomic scope" value="Bacteria"/>
</dbReference>
<dbReference type="HOGENOM" id="CLU_013476_2_1_0"/>
<dbReference type="InParanoid" id="Q9RTN7"/>
<dbReference type="OrthoDB" id="9764318at2"/>
<dbReference type="UniPathway" id="UPA00223">
    <property type="reaction ID" value="UER00718"/>
</dbReference>
<dbReference type="UniPathway" id="UPA00946"/>
<dbReference type="Proteomes" id="UP000002524">
    <property type="component" value="Chromosome 1"/>
</dbReference>
<dbReference type="GO" id="GO:0005829">
    <property type="term" value="C:cytosol"/>
    <property type="evidence" value="ECO:0000318"/>
    <property type="project" value="GO_Central"/>
</dbReference>
<dbReference type="GO" id="GO:0047456">
    <property type="term" value="F:2-methylisocitrate dehydratase activity"/>
    <property type="evidence" value="ECO:0000250"/>
    <property type="project" value="UniProtKB"/>
</dbReference>
<dbReference type="GO" id="GO:0051539">
    <property type="term" value="F:4 iron, 4 sulfur cluster binding"/>
    <property type="evidence" value="ECO:0000250"/>
    <property type="project" value="UniProtKB"/>
</dbReference>
<dbReference type="GO" id="GO:0003994">
    <property type="term" value="F:aconitate hydratase activity"/>
    <property type="evidence" value="ECO:0000250"/>
    <property type="project" value="UniProtKB"/>
</dbReference>
<dbReference type="GO" id="GO:0030350">
    <property type="term" value="F:iron-responsive element binding"/>
    <property type="evidence" value="ECO:0000318"/>
    <property type="project" value="GO_Central"/>
</dbReference>
<dbReference type="GO" id="GO:0046872">
    <property type="term" value="F:metal ion binding"/>
    <property type="evidence" value="ECO:0007669"/>
    <property type="project" value="UniProtKB-KW"/>
</dbReference>
<dbReference type="GO" id="GO:0003730">
    <property type="term" value="F:mRNA 3'-UTR binding"/>
    <property type="evidence" value="ECO:0000250"/>
    <property type="project" value="UniProtKB"/>
</dbReference>
<dbReference type="GO" id="GO:0003729">
    <property type="term" value="F:mRNA binding"/>
    <property type="evidence" value="ECO:0000250"/>
    <property type="project" value="UniProtKB"/>
</dbReference>
<dbReference type="GO" id="GO:0019679">
    <property type="term" value="P:propionate metabolic process, methylcitrate cycle"/>
    <property type="evidence" value="ECO:0000250"/>
    <property type="project" value="UniProtKB"/>
</dbReference>
<dbReference type="GO" id="GO:0006099">
    <property type="term" value="P:tricarboxylic acid cycle"/>
    <property type="evidence" value="ECO:0000250"/>
    <property type="project" value="UniProtKB"/>
</dbReference>
<dbReference type="CDD" id="cd01586">
    <property type="entry name" value="AcnA_IRP"/>
    <property type="match status" value="1"/>
</dbReference>
<dbReference type="CDD" id="cd01580">
    <property type="entry name" value="AcnA_IRP_Swivel"/>
    <property type="match status" value="1"/>
</dbReference>
<dbReference type="FunFam" id="3.20.19.10:FF:000001">
    <property type="entry name" value="Aconitate hydratase"/>
    <property type="match status" value="1"/>
</dbReference>
<dbReference type="FunFam" id="3.30.499.10:FF:000002">
    <property type="entry name" value="Aconitate hydratase"/>
    <property type="match status" value="1"/>
</dbReference>
<dbReference type="FunFam" id="3.30.499.10:FF:000020">
    <property type="entry name" value="Aconitate hydratase A"/>
    <property type="match status" value="1"/>
</dbReference>
<dbReference type="Gene3D" id="6.10.190.10">
    <property type="match status" value="1"/>
</dbReference>
<dbReference type="Gene3D" id="3.30.499.10">
    <property type="entry name" value="Aconitase, domain 3"/>
    <property type="match status" value="2"/>
</dbReference>
<dbReference type="Gene3D" id="3.20.19.10">
    <property type="entry name" value="Aconitase, domain 4"/>
    <property type="match status" value="1"/>
</dbReference>
<dbReference type="InterPro" id="IPR044137">
    <property type="entry name" value="AcnA_IRP_Swivel"/>
</dbReference>
<dbReference type="InterPro" id="IPR015931">
    <property type="entry name" value="Acnase/IPM_dHydase_lsu_aba_1/3"/>
</dbReference>
<dbReference type="InterPro" id="IPR001030">
    <property type="entry name" value="Acoase/IPM_deHydtase_lsu_aba"/>
</dbReference>
<dbReference type="InterPro" id="IPR015928">
    <property type="entry name" value="Aconitase/3IPM_dehydase_swvl"/>
</dbReference>
<dbReference type="InterPro" id="IPR006249">
    <property type="entry name" value="Aconitase/IRP2"/>
</dbReference>
<dbReference type="InterPro" id="IPR018136">
    <property type="entry name" value="Aconitase_4Fe-4S_BS"/>
</dbReference>
<dbReference type="InterPro" id="IPR036008">
    <property type="entry name" value="Aconitase_4Fe-4S_dom"/>
</dbReference>
<dbReference type="InterPro" id="IPR000573">
    <property type="entry name" value="AconitaseA/IPMdHydase_ssu_swvl"/>
</dbReference>
<dbReference type="NCBIfam" id="TIGR01341">
    <property type="entry name" value="aconitase_1"/>
    <property type="match status" value="1"/>
</dbReference>
<dbReference type="NCBIfam" id="NF006757">
    <property type="entry name" value="PRK09277.1"/>
    <property type="match status" value="1"/>
</dbReference>
<dbReference type="NCBIfam" id="NF009520">
    <property type="entry name" value="PRK12881.1"/>
    <property type="match status" value="1"/>
</dbReference>
<dbReference type="PANTHER" id="PTHR11670">
    <property type="entry name" value="ACONITASE/IRON-RESPONSIVE ELEMENT FAMILY MEMBER"/>
    <property type="match status" value="1"/>
</dbReference>
<dbReference type="Pfam" id="PF00330">
    <property type="entry name" value="Aconitase"/>
    <property type="match status" value="1"/>
</dbReference>
<dbReference type="Pfam" id="PF00694">
    <property type="entry name" value="Aconitase_C"/>
    <property type="match status" value="1"/>
</dbReference>
<dbReference type="PRINTS" id="PR00415">
    <property type="entry name" value="ACONITASE"/>
</dbReference>
<dbReference type="SUPFAM" id="SSF53732">
    <property type="entry name" value="Aconitase iron-sulfur domain"/>
    <property type="match status" value="1"/>
</dbReference>
<dbReference type="SUPFAM" id="SSF52016">
    <property type="entry name" value="LeuD/IlvD-like"/>
    <property type="match status" value="1"/>
</dbReference>
<dbReference type="PROSITE" id="PS00450">
    <property type="entry name" value="ACONITASE_1"/>
    <property type="match status" value="1"/>
</dbReference>
<dbReference type="PROSITE" id="PS01244">
    <property type="entry name" value="ACONITASE_2"/>
    <property type="match status" value="1"/>
</dbReference>
<accession>Q9RTN7</accession>
<feature type="propeptide" id="PRO_0000370734" evidence="4">
    <location>
        <begin position="1"/>
        <end position="2"/>
    </location>
</feature>
<feature type="chain" id="PRO_0000370735" description="Aconitate hydratase A" evidence="4">
    <location>
        <begin position="3"/>
        <end position="906"/>
    </location>
</feature>
<feature type="binding site" evidence="2">
    <location>
        <position position="441"/>
    </location>
    <ligand>
        <name>[4Fe-4S] cluster</name>
        <dbReference type="ChEBI" id="CHEBI:49883"/>
    </ligand>
</feature>
<feature type="binding site" evidence="2">
    <location>
        <position position="507"/>
    </location>
    <ligand>
        <name>[4Fe-4S] cluster</name>
        <dbReference type="ChEBI" id="CHEBI:49883"/>
    </ligand>
</feature>
<feature type="binding site" evidence="2">
    <location>
        <position position="510"/>
    </location>
    <ligand>
        <name>[4Fe-4S] cluster</name>
        <dbReference type="ChEBI" id="CHEBI:49883"/>
    </ligand>
</feature>
<reference key="1">
    <citation type="journal article" date="1999" name="Science">
        <title>Genome sequence of the radioresistant bacterium Deinococcus radiodurans R1.</title>
        <authorList>
            <person name="White O."/>
            <person name="Eisen J.A."/>
            <person name="Heidelberg J.F."/>
            <person name="Hickey E.K."/>
            <person name="Peterson J.D."/>
            <person name="Dodson R.J."/>
            <person name="Haft D.H."/>
            <person name="Gwinn M.L."/>
            <person name="Nelson W.C."/>
            <person name="Richardson D.L."/>
            <person name="Moffat K.S."/>
            <person name="Qin H."/>
            <person name="Jiang L."/>
            <person name="Pamphile W."/>
            <person name="Crosby M."/>
            <person name="Shen M."/>
            <person name="Vamathevan J.J."/>
            <person name="Lam P."/>
            <person name="McDonald L.A."/>
            <person name="Utterback T.R."/>
            <person name="Zalewski C."/>
            <person name="Makarova K.S."/>
            <person name="Aravind L."/>
            <person name="Daly M.J."/>
            <person name="Minton K.W."/>
            <person name="Fleischmann R.D."/>
            <person name="Ketchum K.A."/>
            <person name="Nelson K.E."/>
            <person name="Salzberg S.L."/>
            <person name="Smith H.O."/>
            <person name="Venter J.C."/>
            <person name="Fraser C.M."/>
        </authorList>
    </citation>
    <scope>NUCLEOTIDE SEQUENCE [LARGE SCALE GENOMIC DNA]</scope>
    <source>
        <strain>ATCC 13939 / DSM 20539 / JCM 16871 / CCUG 27074 / LMG 4051 / NBRC 15346 / NCIMB 9279 / VKM B-1422 / R1</strain>
    </source>
</reference>
<reference key="2">
    <citation type="journal article" date="2004" name="Biochem. Biophys. Res. Commun.">
        <title>Protein recycling is a major component of post-irradiation recovery in Deinococcus radiodurans strain R1.</title>
        <authorList>
            <person name="Joshi B.S."/>
            <person name="Schmid R."/>
            <person name="Altendorf K."/>
            <person name="Apte S.K."/>
        </authorList>
    </citation>
    <scope>PROTEIN SEQUENCE OF 3-19</scope>
    <source>
        <strain>ATCC 13939 / DSM 20539 / JCM 16871 / CCUG 27074 / LMG 4051 / NBRC 15346 / NCIMB 9279 / VKM B-1422 / R1</strain>
    </source>
</reference>
<proteinExistence type="evidence at protein level"/>
<protein>
    <recommendedName>
        <fullName evidence="3">Aconitate hydratase A</fullName>
        <shortName evidence="3">ACN</shortName>
        <shortName evidence="3">Aconitase</shortName>
        <ecNumber evidence="3">4.2.1.3</ecNumber>
    </recommendedName>
    <alternativeName>
        <fullName evidence="3">(2R,3S)-2-methylisocitrate dehydratase</fullName>
    </alternativeName>
    <alternativeName>
        <fullName evidence="3">(2S,3R)-3-hydroxybutane-1,2,3-tricarboxylate dehydratase</fullName>
    </alternativeName>
    <alternativeName>
        <fullName evidence="1">Iron-responsive protein-like</fullName>
        <shortName evidence="1">IRP-like</shortName>
    </alternativeName>
    <alternativeName>
        <fullName evidence="3">Probable 2-methyl-cis-aconitate hydratase</fullName>
        <ecNumber evidence="3">4.2.1.99</ecNumber>
    </alternativeName>
    <alternativeName>
        <fullName evidence="1">RNA-binding protein</fullName>
    </alternativeName>
</protein>
<name>ACNA_DEIRA</name>
<organism>
    <name type="scientific">Deinococcus radiodurans (strain ATCC 13939 / DSM 20539 / JCM 16871 / CCUG 27074 / LMG 4051 / NBRC 15346 / NCIMB 9279 / VKM B-1422 / R1)</name>
    <dbReference type="NCBI Taxonomy" id="243230"/>
    <lineage>
        <taxon>Bacteria</taxon>
        <taxon>Thermotogati</taxon>
        <taxon>Deinococcota</taxon>
        <taxon>Deinococci</taxon>
        <taxon>Deinococcales</taxon>
        <taxon>Deinococcaceae</taxon>
        <taxon>Deinococcus</taxon>
    </lineage>
</organism>